<feature type="chain" id="PRO_0000055992" description="Vacuolar membrane protein pep3">
    <location>
        <begin position="1"/>
        <end position="900"/>
    </location>
</feature>
<feature type="repeat" description="TPR 1">
    <location>
        <begin position="314"/>
        <end position="345"/>
    </location>
</feature>
<feature type="repeat" description="TPR 2">
    <location>
        <begin position="373"/>
        <end position="406"/>
    </location>
</feature>
<feature type="repeat" description="TPR 3">
    <location>
        <begin position="408"/>
        <end position="436"/>
    </location>
</feature>
<feature type="repeat" description="TPR 4">
    <location>
        <begin position="546"/>
        <end position="579"/>
    </location>
</feature>
<feature type="repeat" description="CHCR">
    <location>
        <begin position="602"/>
        <end position="756"/>
    </location>
</feature>
<feature type="zinc finger region" description="RING-type; atypical" evidence="2">
    <location>
        <begin position="837"/>
        <end position="884"/>
    </location>
</feature>
<feature type="region of interest" description="Disordered" evidence="3">
    <location>
        <begin position="1"/>
        <end position="20"/>
    </location>
</feature>
<gene>
    <name type="primary">pep3</name>
    <name type="synonym">vps18</name>
    <name type="ORF">SPCC790.02</name>
</gene>
<accession>O74925</accession>
<proteinExistence type="inferred from homology"/>
<keyword id="KW-0472">Membrane</keyword>
<keyword id="KW-0479">Metal-binding</keyword>
<keyword id="KW-1185">Reference proteome</keyword>
<keyword id="KW-0677">Repeat</keyword>
<keyword id="KW-0802">TPR repeat</keyword>
<keyword id="KW-0926">Vacuole</keyword>
<keyword id="KW-0862">Zinc</keyword>
<keyword id="KW-0863">Zinc-finger</keyword>
<sequence length="900" mass="103720">MSLAEDWIDPNSSEDSDIQEDAELEYTADNPEKEQRGVFSLEKVQLQFPVSIRCLAVENNILVMALTSDKLMIVDLERPEDIIDIELPKKVLALGLTYKIFLDPSGHYIFVTTTAGDNCLFTPSHQGRVLTKLKGHTVEAVQWNLNGGNILELLIASKSGVLLELVLTLDSANLKRIEKSINTLYSFPFMESPMGILKNIQDDSMTIVTNKRILRFEPKTSRGKDQLYFSPAFQGSMKEILSFSEEETAQCFSYSPFPKNLAEPYTLALKTSKRIIYLDIMNPVNPDIQDYEFNESPKLSVPTVEMNMILTSFHLAFLDLDTLYIVNRVNGKESYQQRVNLSPHEEILGLCCDHEKNTYWLYTTDSLHELVVNNETREASLVFLEKGDFEKALECANTAKVRNTVLVGYAEFLMEHEEYERAATLYAETLKSVEEVALKFIELNQKDVLRLYLWKKLRSYKSTMKIQKSLLVNWLLELMLAKLNSLDEKERLELFPENVMQQRQQVQREFSTLLNQYKDEINREAAYNLANNYGKEEQLLQIATVMKDQSYIMHYWVQRENYEKALETLNEGVSQETLIQHATALLTHRPNETVSIWERQTDLDVHALIPSLLSYNQRSHVPVEENAAIRYLRYVTGVLGCVDPSIHNTLFCIYACHSSSNESYLMNYIEQQGNHPLYDMDLGIRLCLQFNCRRSAVKILVLMKLYSQGVELALEADDCELAATIANIPEEDVVLKKTLWQTIAKYMFSKKSGIKETLRFLENSEVLQLPELIRLLPEDIKLDDLSDNVCDELDHCMKRIEQLDFEIGQASEVAHEIQTNAENMRNRYIVLEPNESCWHCNQPLFSEPFVLFPCQHAFHRSCMLEKTYKLASEKNILKECQLCGPSYAVRLINEPFSTDF</sequence>
<name>PEP3_SCHPO</name>
<protein>
    <recommendedName>
        <fullName>Vacuolar membrane protein pep3</fullName>
    </recommendedName>
    <alternativeName>
        <fullName>Vacuolar protein sorting-associated protein 18</fullName>
    </alternativeName>
</protein>
<evidence type="ECO:0000250" key="1"/>
<evidence type="ECO:0000255" key="2">
    <source>
        <dbReference type="PROSITE-ProRule" id="PRU00175"/>
    </source>
</evidence>
<evidence type="ECO:0000256" key="3">
    <source>
        <dbReference type="SAM" id="MobiDB-lite"/>
    </source>
</evidence>
<evidence type="ECO:0000305" key="4"/>
<organism>
    <name type="scientific">Schizosaccharomyces pombe (strain 972 / ATCC 24843)</name>
    <name type="common">Fission yeast</name>
    <dbReference type="NCBI Taxonomy" id="284812"/>
    <lineage>
        <taxon>Eukaryota</taxon>
        <taxon>Fungi</taxon>
        <taxon>Dikarya</taxon>
        <taxon>Ascomycota</taxon>
        <taxon>Taphrinomycotina</taxon>
        <taxon>Schizosaccharomycetes</taxon>
        <taxon>Schizosaccharomycetales</taxon>
        <taxon>Schizosaccharomycetaceae</taxon>
        <taxon>Schizosaccharomyces</taxon>
    </lineage>
</organism>
<comment type="function">
    <text evidence="1">Required for vacuolar biogenesis.</text>
</comment>
<comment type="subcellular location">
    <subcellularLocation>
        <location evidence="1">Vacuole membrane</location>
        <topology evidence="1">Peripheral membrane protein</topology>
        <orientation evidence="1">Cytoplasmic side</orientation>
    </subcellularLocation>
</comment>
<comment type="similarity">
    <text evidence="4">Belongs to the VPS18 family.</text>
</comment>
<dbReference type="EMBL" id="CU329672">
    <property type="protein sequence ID" value="CAA21292.1"/>
    <property type="molecule type" value="Genomic_DNA"/>
</dbReference>
<dbReference type="PIR" id="T41607">
    <property type="entry name" value="T41607"/>
</dbReference>
<dbReference type="RefSeq" id="NP_588498.1">
    <property type="nucleotide sequence ID" value="NM_001023488.2"/>
</dbReference>
<dbReference type="SMR" id="O74925"/>
<dbReference type="BioGRID" id="275626">
    <property type="interactions" value="1"/>
</dbReference>
<dbReference type="FunCoup" id="O74925">
    <property type="interactions" value="599"/>
</dbReference>
<dbReference type="STRING" id="284812.O74925"/>
<dbReference type="iPTMnet" id="O74925"/>
<dbReference type="PaxDb" id="4896-SPCC790.02.1"/>
<dbReference type="EnsemblFungi" id="SPCC790.02.1">
    <property type="protein sequence ID" value="SPCC790.02.1:pep"/>
    <property type="gene ID" value="SPCC790.02"/>
</dbReference>
<dbReference type="GeneID" id="2539053"/>
<dbReference type="KEGG" id="spo:2539053"/>
<dbReference type="PomBase" id="SPCC790.02">
    <property type="gene designation" value="pep3"/>
</dbReference>
<dbReference type="VEuPathDB" id="FungiDB:SPCC790.02"/>
<dbReference type="eggNOG" id="KOG2034">
    <property type="taxonomic scope" value="Eukaryota"/>
</dbReference>
<dbReference type="HOGENOM" id="CLU_003488_0_0_1"/>
<dbReference type="InParanoid" id="O74925"/>
<dbReference type="OMA" id="WIQREKW"/>
<dbReference type="PhylomeDB" id="O74925"/>
<dbReference type="PRO" id="PR:O74925"/>
<dbReference type="Proteomes" id="UP000002485">
    <property type="component" value="Chromosome III"/>
</dbReference>
<dbReference type="GO" id="GO:0032153">
    <property type="term" value="C:cell division site"/>
    <property type="evidence" value="ECO:0007005"/>
    <property type="project" value="PomBase"/>
</dbReference>
<dbReference type="GO" id="GO:0033263">
    <property type="term" value="C:CORVET complex"/>
    <property type="evidence" value="ECO:0000266"/>
    <property type="project" value="PomBase"/>
</dbReference>
<dbReference type="GO" id="GO:0005737">
    <property type="term" value="C:cytoplasm"/>
    <property type="evidence" value="ECO:0007005"/>
    <property type="project" value="PomBase"/>
</dbReference>
<dbReference type="GO" id="GO:0005829">
    <property type="term" value="C:cytosol"/>
    <property type="evidence" value="ECO:0007005"/>
    <property type="project" value="PomBase"/>
</dbReference>
<dbReference type="GO" id="GO:0005768">
    <property type="term" value="C:endosome"/>
    <property type="evidence" value="ECO:0000318"/>
    <property type="project" value="GO_Central"/>
</dbReference>
<dbReference type="GO" id="GO:0030897">
    <property type="term" value="C:HOPS complex"/>
    <property type="evidence" value="ECO:0000318"/>
    <property type="project" value="GO_Central"/>
</dbReference>
<dbReference type="GO" id="GO:0005774">
    <property type="term" value="C:vacuolar membrane"/>
    <property type="evidence" value="ECO:0007669"/>
    <property type="project" value="UniProtKB-SubCell"/>
</dbReference>
<dbReference type="GO" id="GO:0030674">
    <property type="term" value="F:protein-macromolecule adaptor activity"/>
    <property type="evidence" value="ECO:0000318"/>
    <property type="project" value="GO_Central"/>
</dbReference>
<dbReference type="GO" id="GO:0061630">
    <property type="term" value="F:ubiquitin protein ligase activity"/>
    <property type="evidence" value="ECO:0000255"/>
    <property type="project" value="PomBase"/>
</dbReference>
<dbReference type="GO" id="GO:0008270">
    <property type="term" value="F:zinc ion binding"/>
    <property type="evidence" value="ECO:0000255"/>
    <property type="project" value="PomBase"/>
</dbReference>
<dbReference type="GO" id="GO:0007032">
    <property type="term" value="P:endosome organization"/>
    <property type="evidence" value="ECO:0000318"/>
    <property type="project" value="GO_Central"/>
</dbReference>
<dbReference type="GO" id="GO:0006895">
    <property type="term" value="P:Golgi to endosome transport"/>
    <property type="evidence" value="ECO:0000266"/>
    <property type="project" value="PomBase"/>
</dbReference>
<dbReference type="GO" id="GO:0006886">
    <property type="term" value="P:intracellular protein transport"/>
    <property type="evidence" value="ECO:0007669"/>
    <property type="project" value="InterPro"/>
</dbReference>
<dbReference type="GO" id="GO:0045324">
    <property type="term" value="P:late endosome to vacuole transport"/>
    <property type="evidence" value="ECO:0000266"/>
    <property type="project" value="PomBase"/>
</dbReference>
<dbReference type="GO" id="GO:0048284">
    <property type="term" value="P:organelle fusion"/>
    <property type="evidence" value="ECO:0000318"/>
    <property type="project" value="GO_Central"/>
</dbReference>
<dbReference type="GO" id="GO:0007033">
    <property type="term" value="P:vacuole organization"/>
    <property type="evidence" value="ECO:0000318"/>
    <property type="project" value="GO_Central"/>
</dbReference>
<dbReference type="GO" id="GO:0006904">
    <property type="term" value="P:vesicle docking involved in exocytosis"/>
    <property type="evidence" value="ECO:0000318"/>
    <property type="project" value="GO_Central"/>
</dbReference>
<dbReference type="GO" id="GO:0099022">
    <property type="term" value="P:vesicle tethering"/>
    <property type="evidence" value="ECO:0000266"/>
    <property type="project" value="PomBase"/>
</dbReference>
<dbReference type="CDD" id="cd16462">
    <property type="entry name" value="RING-H2_Pep3p-like"/>
    <property type="match status" value="1"/>
</dbReference>
<dbReference type="InterPro" id="IPR000547">
    <property type="entry name" value="Clathrin_H-chain/VPS_repeat"/>
</dbReference>
<dbReference type="InterPro" id="IPR007810">
    <property type="entry name" value="Pep3_Vps18"/>
</dbReference>
<dbReference type="InterPro" id="IPR001841">
    <property type="entry name" value="Znf_RING"/>
</dbReference>
<dbReference type="PANTHER" id="PTHR23323">
    <property type="entry name" value="VACUOLAR PROTEIN SORTING-ASSOCIATED PROTEIN"/>
    <property type="match status" value="1"/>
</dbReference>
<dbReference type="PANTHER" id="PTHR23323:SF26">
    <property type="entry name" value="VACUOLAR PROTEIN SORTING-ASSOCIATED PROTEIN 18 HOMOLOG"/>
    <property type="match status" value="1"/>
</dbReference>
<dbReference type="Pfam" id="PF05131">
    <property type="entry name" value="Pep3_Vps18"/>
    <property type="match status" value="1"/>
</dbReference>
<dbReference type="SUPFAM" id="SSF101908">
    <property type="entry name" value="Putative isomerase YbhE"/>
    <property type="match status" value="1"/>
</dbReference>
<dbReference type="SUPFAM" id="SSF57850">
    <property type="entry name" value="RING/U-box"/>
    <property type="match status" value="1"/>
</dbReference>
<dbReference type="PROSITE" id="PS50236">
    <property type="entry name" value="CHCR"/>
    <property type="match status" value="1"/>
</dbReference>
<dbReference type="PROSITE" id="PS50089">
    <property type="entry name" value="ZF_RING_2"/>
    <property type="match status" value="1"/>
</dbReference>
<reference key="1">
    <citation type="journal article" date="2002" name="Nature">
        <title>The genome sequence of Schizosaccharomyces pombe.</title>
        <authorList>
            <person name="Wood V."/>
            <person name="Gwilliam R."/>
            <person name="Rajandream M.A."/>
            <person name="Lyne M.H."/>
            <person name="Lyne R."/>
            <person name="Stewart A."/>
            <person name="Sgouros J.G."/>
            <person name="Peat N."/>
            <person name="Hayles J."/>
            <person name="Baker S.G."/>
            <person name="Basham D."/>
            <person name="Bowman S."/>
            <person name="Brooks K."/>
            <person name="Brown D."/>
            <person name="Brown S."/>
            <person name="Chillingworth T."/>
            <person name="Churcher C.M."/>
            <person name="Collins M."/>
            <person name="Connor R."/>
            <person name="Cronin A."/>
            <person name="Davis P."/>
            <person name="Feltwell T."/>
            <person name="Fraser A."/>
            <person name="Gentles S."/>
            <person name="Goble A."/>
            <person name="Hamlin N."/>
            <person name="Harris D.E."/>
            <person name="Hidalgo J."/>
            <person name="Hodgson G."/>
            <person name="Holroyd S."/>
            <person name="Hornsby T."/>
            <person name="Howarth S."/>
            <person name="Huckle E.J."/>
            <person name="Hunt S."/>
            <person name="Jagels K."/>
            <person name="James K.D."/>
            <person name="Jones L."/>
            <person name="Jones M."/>
            <person name="Leather S."/>
            <person name="McDonald S."/>
            <person name="McLean J."/>
            <person name="Mooney P."/>
            <person name="Moule S."/>
            <person name="Mungall K.L."/>
            <person name="Murphy L.D."/>
            <person name="Niblett D."/>
            <person name="Odell C."/>
            <person name="Oliver K."/>
            <person name="O'Neil S."/>
            <person name="Pearson D."/>
            <person name="Quail M.A."/>
            <person name="Rabbinowitsch E."/>
            <person name="Rutherford K.M."/>
            <person name="Rutter S."/>
            <person name="Saunders D."/>
            <person name="Seeger K."/>
            <person name="Sharp S."/>
            <person name="Skelton J."/>
            <person name="Simmonds M.N."/>
            <person name="Squares R."/>
            <person name="Squares S."/>
            <person name="Stevens K."/>
            <person name="Taylor K."/>
            <person name="Taylor R.G."/>
            <person name="Tivey A."/>
            <person name="Walsh S.V."/>
            <person name="Warren T."/>
            <person name="Whitehead S."/>
            <person name="Woodward J.R."/>
            <person name="Volckaert G."/>
            <person name="Aert R."/>
            <person name="Robben J."/>
            <person name="Grymonprez B."/>
            <person name="Weltjens I."/>
            <person name="Vanstreels E."/>
            <person name="Rieger M."/>
            <person name="Schaefer M."/>
            <person name="Mueller-Auer S."/>
            <person name="Gabel C."/>
            <person name="Fuchs M."/>
            <person name="Duesterhoeft A."/>
            <person name="Fritzc C."/>
            <person name="Holzer E."/>
            <person name="Moestl D."/>
            <person name="Hilbert H."/>
            <person name="Borzym K."/>
            <person name="Langer I."/>
            <person name="Beck A."/>
            <person name="Lehrach H."/>
            <person name="Reinhardt R."/>
            <person name="Pohl T.M."/>
            <person name="Eger P."/>
            <person name="Zimmermann W."/>
            <person name="Wedler H."/>
            <person name="Wambutt R."/>
            <person name="Purnelle B."/>
            <person name="Goffeau A."/>
            <person name="Cadieu E."/>
            <person name="Dreano S."/>
            <person name="Gloux S."/>
            <person name="Lelaure V."/>
            <person name="Mottier S."/>
            <person name="Galibert F."/>
            <person name="Aves S.J."/>
            <person name="Xiang Z."/>
            <person name="Hunt C."/>
            <person name="Moore K."/>
            <person name="Hurst S.M."/>
            <person name="Lucas M."/>
            <person name="Rochet M."/>
            <person name="Gaillardin C."/>
            <person name="Tallada V.A."/>
            <person name="Garzon A."/>
            <person name="Thode G."/>
            <person name="Daga R.R."/>
            <person name="Cruzado L."/>
            <person name="Jimenez J."/>
            <person name="Sanchez M."/>
            <person name="del Rey F."/>
            <person name="Benito J."/>
            <person name="Dominguez A."/>
            <person name="Revuelta J.L."/>
            <person name="Moreno S."/>
            <person name="Armstrong J."/>
            <person name="Forsburg S.L."/>
            <person name="Cerutti L."/>
            <person name="Lowe T."/>
            <person name="McCombie W.R."/>
            <person name="Paulsen I."/>
            <person name="Potashkin J."/>
            <person name="Shpakovski G.V."/>
            <person name="Ussery D."/>
            <person name="Barrell B.G."/>
            <person name="Nurse P."/>
        </authorList>
    </citation>
    <scope>NUCLEOTIDE SEQUENCE [LARGE SCALE GENOMIC DNA]</scope>
    <source>
        <strain>972 / ATCC 24843</strain>
    </source>
</reference>